<gene>
    <name evidence="1" type="primary">glyA</name>
    <name type="ordered locus">Rfer_2658</name>
</gene>
<evidence type="ECO:0000255" key="1">
    <source>
        <dbReference type="HAMAP-Rule" id="MF_00051"/>
    </source>
</evidence>
<comment type="function">
    <text evidence="1">Catalyzes the reversible interconversion of serine and glycine with tetrahydrofolate (THF) serving as the one-carbon carrier. This reaction serves as the major source of one-carbon groups required for the biosynthesis of purines, thymidylate, methionine, and other important biomolecules. Also exhibits THF-independent aldolase activity toward beta-hydroxyamino acids, producing glycine and aldehydes, via a retro-aldol mechanism.</text>
</comment>
<comment type="catalytic activity">
    <reaction evidence="1">
        <text>(6R)-5,10-methylene-5,6,7,8-tetrahydrofolate + glycine + H2O = (6S)-5,6,7,8-tetrahydrofolate + L-serine</text>
        <dbReference type="Rhea" id="RHEA:15481"/>
        <dbReference type="ChEBI" id="CHEBI:15377"/>
        <dbReference type="ChEBI" id="CHEBI:15636"/>
        <dbReference type="ChEBI" id="CHEBI:33384"/>
        <dbReference type="ChEBI" id="CHEBI:57305"/>
        <dbReference type="ChEBI" id="CHEBI:57453"/>
        <dbReference type="EC" id="2.1.2.1"/>
    </reaction>
</comment>
<comment type="cofactor">
    <cofactor evidence="1">
        <name>pyridoxal 5'-phosphate</name>
        <dbReference type="ChEBI" id="CHEBI:597326"/>
    </cofactor>
</comment>
<comment type="pathway">
    <text evidence="1">One-carbon metabolism; tetrahydrofolate interconversion.</text>
</comment>
<comment type="pathway">
    <text evidence="1">Amino-acid biosynthesis; glycine biosynthesis; glycine from L-serine: step 1/1.</text>
</comment>
<comment type="subunit">
    <text evidence="1">Homodimer.</text>
</comment>
<comment type="subcellular location">
    <subcellularLocation>
        <location evidence="1">Cytoplasm</location>
    </subcellularLocation>
</comment>
<comment type="similarity">
    <text evidence="1">Belongs to the SHMT family.</text>
</comment>
<dbReference type="EC" id="2.1.2.1" evidence="1"/>
<dbReference type="EMBL" id="CP000267">
    <property type="protein sequence ID" value="ABD70374.1"/>
    <property type="molecule type" value="Genomic_DNA"/>
</dbReference>
<dbReference type="RefSeq" id="WP_011464942.1">
    <property type="nucleotide sequence ID" value="NC_007908.1"/>
</dbReference>
<dbReference type="SMR" id="Q21V29"/>
<dbReference type="STRING" id="338969.Rfer_2658"/>
<dbReference type="KEGG" id="rfr:Rfer_2658"/>
<dbReference type="eggNOG" id="COG0112">
    <property type="taxonomic scope" value="Bacteria"/>
</dbReference>
<dbReference type="HOGENOM" id="CLU_022477_2_1_4"/>
<dbReference type="OrthoDB" id="9803846at2"/>
<dbReference type="UniPathway" id="UPA00193"/>
<dbReference type="UniPathway" id="UPA00288">
    <property type="reaction ID" value="UER01023"/>
</dbReference>
<dbReference type="Proteomes" id="UP000008332">
    <property type="component" value="Chromosome"/>
</dbReference>
<dbReference type="GO" id="GO:0005829">
    <property type="term" value="C:cytosol"/>
    <property type="evidence" value="ECO:0007669"/>
    <property type="project" value="TreeGrafter"/>
</dbReference>
<dbReference type="GO" id="GO:0004372">
    <property type="term" value="F:glycine hydroxymethyltransferase activity"/>
    <property type="evidence" value="ECO:0007669"/>
    <property type="project" value="UniProtKB-UniRule"/>
</dbReference>
<dbReference type="GO" id="GO:0030170">
    <property type="term" value="F:pyridoxal phosphate binding"/>
    <property type="evidence" value="ECO:0007669"/>
    <property type="project" value="UniProtKB-UniRule"/>
</dbReference>
<dbReference type="GO" id="GO:0019264">
    <property type="term" value="P:glycine biosynthetic process from serine"/>
    <property type="evidence" value="ECO:0007669"/>
    <property type="project" value="UniProtKB-UniRule"/>
</dbReference>
<dbReference type="GO" id="GO:0035999">
    <property type="term" value="P:tetrahydrofolate interconversion"/>
    <property type="evidence" value="ECO:0007669"/>
    <property type="project" value="UniProtKB-UniRule"/>
</dbReference>
<dbReference type="CDD" id="cd00378">
    <property type="entry name" value="SHMT"/>
    <property type="match status" value="1"/>
</dbReference>
<dbReference type="FunFam" id="3.40.640.10:FF:000001">
    <property type="entry name" value="Serine hydroxymethyltransferase"/>
    <property type="match status" value="1"/>
</dbReference>
<dbReference type="FunFam" id="3.90.1150.10:FF:000003">
    <property type="entry name" value="Serine hydroxymethyltransferase"/>
    <property type="match status" value="1"/>
</dbReference>
<dbReference type="Gene3D" id="3.90.1150.10">
    <property type="entry name" value="Aspartate Aminotransferase, domain 1"/>
    <property type="match status" value="1"/>
</dbReference>
<dbReference type="Gene3D" id="3.40.640.10">
    <property type="entry name" value="Type I PLP-dependent aspartate aminotransferase-like (Major domain)"/>
    <property type="match status" value="1"/>
</dbReference>
<dbReference type="HAMAP" id="MF_00051">
    <property type="entry name" value="SHMT"/>
    <property type="match status" value="1"/>
</dbReference>
<dbReference type="InterPro" id="IPR015424">
    <property type="entry name" value="PyrdxlP-dep_Trfase"/>
</dbReference>
<dbReference type="InterPro" id="IPR015421">
    <property type="entry name" value="PyrdxlP-dep_Trfase_major"/>
</dbReference>
<dbReference type="InterPro" id="IPR015422">
    <property type="entry name" value="PyrdxlP-dep_Trfase_small"/>
</dbReference>
<dbReference type="InterPro" id="IPR001085">
    <property type="entry name" value="Ser_HO-MeTrfase"/>
</dbReference>
<dbReference type="InterPro" id="IPR049943">
    <property type="entry name" value="Ser_HO-MeTrfase-like"/>
</dbReference>
<dbReference type="InterPro" id="IPR019798">
    <property type="entry name" value="Ser_HO-MeTrfase_PLP_BS"/>
</dbReference>
<dbReference type="InterPro" id="IPR039429">
    <property type="entry name" value="SHMT-like_dom"/>
</dbReference>
<dbReference type="NCBIfam" id="NF000586">
    <property type="entry name" value="PRK00011.1"/>
    <property type="match status" value="1"/>
</dbReference>
<dbReference type="PANTHER" id="PTHR11680">
    <property type="entry name" value="SERINE HYDROXYMETHYLTRANSFERASE"/>
    <property type="match status" value="1"/>
</dbReference>
<dbReference type="PANTHER" id="PTHR11680:SF50">
    <property type="entry name" value="SERINE HYDROXYMETHYLTRANSFERASE"/>
    <property type="match status" value="1"/>
</dbReference>
<dbReference type="Pfam" id="PF00464">
    <property type="entry name" value="SHMT"/>
    <property type="match status" value="1"/>
</dbReference>
<dbReference type="PIRSF" id="PIRSF000412">
    <property type="entry name" value="SHMT"/>
    <property type="match status" value="1"/>
</dbReference>
<dbReference type="SUPFAM" id="SSF53383">
    <property type="entry name" value="PLP-dependent transferases"/>
    <property type="match status" value="1"/>
</dbReference>
<dbReference type="PROSITE" id="PS00096">
    <property type="entry name" value="SHMT"/>
    <property type="match status" value="1"/>
</dbReference>
<protein>
    <recommendedName>
        <fullName evidence="1">Serine hydroxymethyltransferase</fullName>
        <shortName evidence="1">SHMT</shortName>
        <shortName evidence="1">Serine methylase</shortName>
        <ecNumber evidence="1">2.1.2.1</ecNumber>
    </recommendedName>
</protein>
<reference key="1">
    <citation type="submission" date="2006-02" db="EMBL/GenBank/DDBJ databases">
        <title>Complete sequence of chromosome of Rhodoferax ferrireducens DSM 15236.</title>
        <authorList>
            <person name="Copeland A."/>
            <person name="Lucas S."/>
            <person name="Lapidus A."/>
            <person name="Barry K."/>
            <person name="Detter J.C."/>
            <person name="Glavina del Rio T."/>
            <person name="Hammon N."/>
            <person name="Israni S."/>
            <person name="Pitluck S."/>
            <person name="Brettin T."/>
            <person name="Bruce D."/>
            <person name="Han C."/>
            <person name="Tapia R."/>
            <person name="Gilna P."/>
            <person name="Kiss H."/>
            <person name="Schmutz J."/>
            <person name="Larimer F."/>
            <person name="Land M."/>
            <person name="Kyrpides N."/>
            <person name="Ivanova N."/>
            <person name="Richardson P."/>
        </authorList>
    </citation>
    <scope>NUCLEOTIDE SEQUENCE [LARGE SCALE GENOMIC DNA]</scope>
    <source>
        <strain>ATCC BAA-621 / DSM 15236 / T118</strain>
    </source>
</reference>
<proteinExistence type="inferred from homology"/>
<feature type="chain" id="PRO_1000006305" description="Serine hydroxymethyltransferase">
    <location>
        <begin position="1"/>
        <end position="414"/>
    </location>
</feature>
<feature type="binding site" evidence="1">
    <location>
        <position position="121"/>
    </location>
    <ligand>
        <name>(6S)-5,6,7,8-tetrahydrofolate</name>
        <dbReference type="ChEBI" id="CHEBI:57453"/>
    </ligand>
</feature>
<feature type="binding site" evidence="1">
    <location>
        <begin position="125"/>
        <end position="127"/>
    </location>
    <ligand>
        <name>(6S)-5,6,7,8-tetrahydrofolate</name>
        <dbReference type="ChEBI" id="CHEBI:57453"/>
    </ligand>
</feature>
<feature type="site" description="Plays an important role in substrate specificity" evidence="1">
    <location>
        <position position="228"/>
    </location>
</feature>
<feature type="modified residue" description="N6-(pyridoxal phosphate)lysine" evidence="1">
    <location>
        <position position="229"/>
    </location>
</feature>
<name>GLYA_ALBFT</name>
<keyword id="KW-0028">Amino-acid biosynthesis</keyword>
<keyword id="KW-0963">Cytoplasm</keyword>
<keyword id="KW-0554">One-carbon metabolism</keyword>
<keyword id="KW-0663">Pyridoxal phosphate</keyword>
<keyword id="KW-1185">Reference proteome</keyword>
<keyword id="KW-0808">Transferase</keyword>
<sequence length="414" mass="44776">MYNRNILIEQTDPEIFAAIAAENARQEQHIELIASENYASPAVMAAQGTQLTNKYAEGYPGKRYYGGCEFVDIAEQLAIDRVKQIFGADAANVQPHCGASANEAVFLAFLKPGDTIMGMSLAEGGHLTHGMALNMSGKWFNVVSYGLNDKEEIDYDAMERKAHESKPKLIIAGASAYSLRIDFARFAKVAKDVGAIFMVDMAHYAGLIAAGIYPNPVPHADVVTSTTHKSLRGPRGGIILMKAQHEKAINSAIFPGLQGGPLMHVIAAKAVAFKEALQPEFKVYQQQVLTNARVVAETLVSRGLRIVSGRTESHVMLVDLRSKSITGKEAEAVLGSAHMTINKNAIPNDPEKPMVTSGVRIGTPAMTTRGFKDEEARITANLIADVLDNPRDSANIDAVRAKVNALTKRFPVYG</sequence>
<organism>
    <name type="scientific">Albidiferax ferrireducens (strain ATCC BAA-621 / DSM 15236 / T118)</name>
    <name type="common">Rhodoferax ferrireducens</name>
    <dbReference type="NCBI Taxonomy" id="338969"/>
    <lineage>
        <taxon>Bacteria</taxon>
        <taxon>Pseudomonadati</taxon>
        <taxon>Pseudomonadota</taxon>
        <taxon>Betaproteobacteria</taxon>
        <taxon>Burkholderiales</taxon>
        <taxon>Comamonadaceae</taxon>
        <taxon>Rhodoferax</taxon>
    </lineage>
</organism>
<accession>Q21V29</accession>